<protein>
    <recommendedName>
        <fullName>Protein aq_1857</fullName>
    </recommendedName>
</protein>
<comment type="similarity">
    <text evidence="1">Belongs to the HesB/IscA family.</text>
</comment>
<evidence type="ECO:0000305" key="1"/>
<evidence type="ECO:0007829" key="2">
    <source>
        <dbReference type="PDB" id="1NWB"/>
    </source>
</evidence>
<accession>O67709</accession>
<reference key="1">
    <citation type="journal article" date="1998" name="Nature">
        <title>The complete genome of the hyperthermophilic bacterium Aquifex aeolicus.</title>
        <authorList>
            <person name="Deckert G."/>
            <person name="Warren P.V."/>
            <person name="Gaasterland T."/>
            <person name="Young W.G."/>
            <person name="Lenox A.L."/>
            <person name="Graham D.E."/>
            <person name="Overbeek R."/>
            <person name="Snead M.A."/>
            <person name="Keller M."/>
            <person name="Aujay M."/>
            <person name="Huber R."/>
            <person name="Feldman R.A."/>
            <person name="Short J.M."/>
            <person name="Olsen G.J."/>
            <person name="Swanson R.V."/>
        </authorList>
    </citation>
    <scope>NUCLEOTIDE SEQUENCE [LARGE SCALE GENOMIC DNA]</scope>
    <source>
        <strain>VF5</strain>
    </source>
</reference>
<reference key="2">
    <citation type="journal article" date="2004" name="Proteins">
        <title>NMR structure of the hypothetical protein AQ-1857 encoded by the Y157 gene from Aquifex aeolicus reveals a novel protein fold.</title>
        <authorList>
            <person name="Xu D."/>
            <person name="Liu G."/>
            <person name="Xiao R."/>
            <person name="Acton T."/>
            <person name="Goldsmith-Fischman S."/>
            <person name="Honig B."/>
            <person name="Montelione G.T."/>
            <person name="Szyperski T."/>
        </authorList>
    </citation>
    <scope>STRUCTURE BY NMR OF 1-101</scope>
</reference>
<dbReference type="EMBL" id="AE000657">
    <property type="protein sequence ID" value="AAC07682.1"/>
    <property type="molecule type" value="Genomic_DNA"/>
</dbReference>
<dbReference type="PIR" id="C70460">
    <property type="entry name" value="C70460"/>
</dbReference>
<dbReference type="RefSeq" id="NP_214277.1">
    <property type="nucleotide sequence ID" value="NC_000918.1"/>
</dbReference>
<dbReference type="RefSeq" id="WP_010881213.1">
    <property type="nucleotide sequence ID" value="NC_000918.1"/>
</dbReference>
<dbReference type="PDB" id="1NWB">
    <property type="method" value="NMR"/>
    <property type="chains" value="A=1-116"/>
</dbReference>
<dbReference type="PDBsum" id="1NWB"/>
<dbReference type="BMRB" id="O67709"/>
<dbReference type="SMR" id="O67709"/>
<dbReference type="FunCoup" id="O67709">
    <property type="interactions" value="370"/>
</dbReference>
<dbReference type="STRING" id="224324.aq_1857"/>
<dbReference type="EnsemblBacteria" id="AAC07682">
    <property type="protein sequence ID" value="AAC07682"/>
    <property type="gene ID" value="aq_1857"/>
</dbReference>
<dbReference type="KEGG" id="aae:aq_1857"/>
<dbReference type="PATRIC" id="fig|224324.8.peg.1438"/>
<dbReference type="eggNOG" id="COG0316">
    <property type="taxonomic scope" value="Bacteria"/>
</dbReference>
<dbReference type="HOGENOM" id="CLU_069054_5_2_0"/>
<dbReference type="InParanoid" id="O67709"/>
<dbReference type="OrthoDB" id="9801228at2"/>
<dbReference type="EvolutionaryTrace" id="O67709"/>
<dbReference type="Proteomes" id="UP000000798">
    <property type="component" value="Chromosome"/>
</dbReference>
<dbReference type="GO" id="GO:0005737">
    <property type="term" value="C:cytoplasm"/>
    <property type="evidence" value="ECO:0000318"/>
    <property type="project" value="GO_Central"/>
</dbReference>
<dbReference type="GO" id="GO:0051537">
    <property type="term" value="F:2 iron, 2 sulfur cluster binding"/>
    <property type="evidence" value="ECO:0000318"/>
    <property type="project" value="GO_Central"/>
</dbReference>
<dbReference type="GO" id="GO:0016226">
    <property type="term" value="P:iron-sulfur cluster assembly"/>
    <property type="evidence" value="ECO:0000318"/>
    <property type="project" value="GO_Central"/>
</dbReference>
<dbReference type="FunFam" id="2.60.300.12:FF:000023">
    <property type="match status" value="1"/>
</dbReference>
<dbReference type="Gene3D" id="2.60.300.12">
    <property type="entry name" value="HesB-like domain"/>
    <property type="match status" value="1"/>
</dbReference>
<dbReference type="InterPro" id="IPR000361">
    <property type="entry name" value="FeS_biogenesis"/>
</dbReference>
<dbReference type="InterPro" id="IPR016092">
    <property type="entry name" value="FeS_cluster_insertion"/>
</dbReference>
<dbReference type="InterPro" id="IPR017870">
    <property type="entry name" value="FeS_cluster_insertion_CS"/>
</dbReference>
<dbReference type="InterPro" id="IPR035903">
    <property type="entry name" value="HesB-like_dom_sf"/>
</dbReference>
<dbReference type="NCBIfam" id="TIGR00049">
    <property type="entry name" value="iron-sulfur cluster assembly accessory protein"/>
    <property type="match status" value="1"/>
</dbReference>
<dbReference type="NCBIfam" id="NF010147">
    <property type="entry name" value="PRK13623.1"/>
    <property type="match status" value="1"/>
</dbReference>
<dbReference type="PANTHER" id="PTHR43011">
    <property type="entry name" value="IRON-SULFUR CLUSTER ASSEMBLY 2 HOMOLOG, MITOCHONDRIAL"/>
    <property type="match status" value="1"/>
</dbReference>
<dbReference type="PANTHER" id="PTHR43011:SF1">
    <property type="entry name" value="IRON-SULFUR CLUSTER ASSEMBLY 2 HOMOLOG, MITOCHONDRIAL"/>
    <property type="match status" value="1"/>
</dbReference>
<dbReference type="Pfam" id="PF01521">
    <property type="entry name" value="Fe-S_biosyn"/>
    <property type="match status" value="1"/>
</dbReference>
<dbReference type="SUPFAM" id="SSF89360">
    <property type="entry name" value="HesB-like domain"/>
    <property type="match status" value="1"/>
</dbReference>
<dbReference type="PROSITE" id="PS01152">
    <property type="entry name" value="HESB"/>
    <property type="match status" value="1"/>
</dbReference>
<organism>
    <name type="scientific">Aquifex aeolicus (strain VF5)</name>
    <dbReference type="NCBI Taxonomy" id="224324"/>
    <lineage>
        <taxon>Bacteria</taxon>
        <taxon>Pseudomonadati</taxon>
        <taxon>Aquificota</taxon>
        <taxon>Aquificia</taxon>
        <taxon>Aquificales</taxon>
        <taxon>Aquificaceae</taxon>
        <taxon>Aquifex</taxon>
    </lineage>
</organism>
<sequence>MQEQAQQFIFKVTDKAVEEIKKVAQENNIENPILRIRVVPGGCSGFQYAMGFDDTVEEGDHVFEYDGVKVVIDPFSMPYVNGAELDYVVDFMGGGFTIRNPNATGSCGCGSSFSCG</sequence>
<gene>
    <name type="ordered locus">aq_1857</name>
</gene>
<feature type="chain" id="PRO_0000077010" description="Protein aq_1857">
    <location>
        <begin position="1"/>
        <end position="116"/>
    </location>
</feature>
<feature type="helix" evidence="2">
    <location>
        <begin position="14"/>
        <end position="25"/>
    </location>
</feature>
<feature type="turn" evidence="2">
    <location>
        <begin position="26"/>
        <end position="28"/>
    </location>
</feature>
<feature type="strand" evidence="2">
    <location>
        <begin position="33"/>
        <end position="36"/>
    </location>
</feature>
<feature type="strand" evidence="2">
    <location>
        <begin position="68"/>
        <end position="72"/>
    </location>
</feature>
<feature type="turn" evidence="2">
    <location>
        <begin position="74"/>
        <end position="76"/>
    </location>
</feature>
<feature type="helix" evidence="2">
    <location>
        <begin position="77"/>
        <end position="79"/>
    </location>
</feature>
<feature type="strand" evidence="2">
    <location>
        <begin position="84"/>
        <end position="90"/>
    </location>
</feature>
<feature type="strand" evidence="2">
    <location>
        <begin position="93"/>
        <end position="99"/>
    </location>
</feature>
<keyword id="KW-0002">3D-structure</keyword>
<keyword id="KW-1185">Reference proteome</keyword>
<name>Y1857_AQUAE</name>
<proteinExistence type="evidence at protein level"/>